<name>CYAA_SCHPO</name>
<gene>
    <name evidence="14" type="primary">cyr1</name>
    <name evidence="11" type="synonym">git2</name>
    <name evidence="14" type="ORF">SPBC19C7.03</name>
</gene>
<protein>
    <recommendedName>
        <fullName>Adenylate cyclase</fullName>
        <ecNumber evidence="13">4.6.1.1</ecNumber>
    </recommendedName>
    <alternativeName>
        <fullName>ATP pyrophosphate-lyase</fullName>
    </alternativeName>
    <alternativeName>
        <fullName>Adenylyl cyclase</fullName>
    </alternativeName>
</protein>
<accession>P14605</accession>
<proteinExistence type="evidence at protein level"/>
<sequence length="1692" mass="190334">MDQSKRLLKSAVPNPPEHFKTGISWLDDLDEKDDDSATSVNYDIPEITEANLCNDSHEALSPCTQPVGNSGRPVEAFKTYPSTPAVPSKSVLFHFYEPDENFSLSDTGRTKSDTALAARESSEKSEVPRDTRSAGIKPYKENNSSNCAISKEAGLRRLIDKDRESFDKNLNQSFTNLTFPEPISDDSDSVEFQRDSLNNNWPASLEGSIHELPRNSDDDGIPASAAHILDLDYHRDSYDSPWKKFLPYPSILSDDSWKAPESWGTSLPTEAIPKQVFTTRFFARPSLGNRKKEFFLRVYRDDRTSVSFICPIGIQTHEVIKLLARLFFLPSSANFYLLLIQFNTERILLPHEQPCIIFERLLSLFGCKVTSDEEINEEDNYSVARLVFTTMDIGADVLRKFSEKKITANLDISRSNLEVIPVKIYPYAHELISLNVSHNLSLDLPLDFMERCVKLKRLDISNNLRSPRGKPITALRQLEVLNMSRNDIYELDPLIFSGLSRNSLKELNIANNKLFFLPHSTRYLVNLTYLDLSYNNFVTFPLIITELSQLETLNFSHNLLSQISSKIGSLVKLKHLYLQFNDLSNRLPQEIGLLKNLETIDLSYNAITNIASLSECPKLNSINVACNLLSFYEYSNPSATFIDFSFCPLTTIDPAFSYSNLVYFDISHAKLIGLKDSVIETLVNVETVKVNYNHFTSISDAISAMQNLKYLSCTNCEMSYVSPNLGKLKHLVHLDLHANNIKIFPEEVWQVSSLKVVNLSSNILEKIKLPVATSKKLTRTISQLKIMRTLSGNPVSSLSSQEFVMPTVEELYLVDNRLGNDCFTALEYFKCLKVLNLSYNYLTEIPSKFFQNFSDLKHLFVSGNELANLSISSTAQVLLETLYANGNRLSSFPKNEALSKSLRFLDISTNNLQNLAVEKAEKKSLTKLPQLEYLNLSGNTWFRFSEHEDTNFTKSYLKNLKFLSIMDLNTKFSNAPSDVLNHFIQRNSPQPNILRYGVCGYLSRSIPVISACELVVNNFLHPQSSLYCVLDSDISAGKNNRVLKFVYDNLASCLAHEINAADSSSEQICNALRRGFLRLNKKLGNVIHYDLRKSSEGDVDSNYVTTMNISEKGYSMDSSCLDIGVSIILVYVRDTRAFVANVGTSMAIMSTRNDSEPTTLSVMHDVYNRDEIRRIVDSCGFISGEIKSTTTRAIGRLSQFPGVQAVPYVNVQYLSELNEFIILANQEFWSVLSKRTVIDVVRANRHSPLLASTKLRDYAIAYGAEKNVLVVIVELNGLFEENSLNFNQLRGDEKTLAISEKNDNMSFVQDLPDDSSLARMNREVSPPKGCIAMVFTDIKNSTLLWERHPIAMRSAIKTHNTIMRRQLRATGGYEVKTEGDAFMVCFQTVPAALLWCFSVQLQLLSADWPNEIVESVQGRLVLGSKNEVLYRGLSVRIGVNYGVTVSELDPITRRMDYYGPVVNRTSRVVSVADGGQIAVSAEVVSVLNQLDSETMSSEKTNVNEMEVRALKQIGYIIHNLGEFKLKGLDTTEMISLVYPVQLQGRLERLIKSRSLGTPTALPETQTYTPVRSRSNSLRPMLARLSDSKSVHGEEGGSGKRSVSSLRNVSPSESTGGYEGCIFDDQQYQLLYELCERLEDHAAILHGFPEPPPCDTGLAAPVNQAEEYSLFYRLTLRIENTIYCVSQMLGHTG</sequence>
<comment type="function">
    <text evidence="6 7 9">Acts in glucose-induced cAMP signaling by catalyzing the synthesis of the second messenger, cAMP to activate PKA signaling and repress sexual development and gluconeogenesis.</text>
</comment>
<comment type="catalytic activity">
    <reaction evidence="13">
        <text>ATP = 3',5'-cyclic AMP + diphosphate</text>
        <dbReference type="Rhea" id="RHEA:15389"/>
        <dbReference type="ChEBI" id="CHEBI:30616"/>
        <dbReference type="ChEBI" id="CHEBI:33019"/>
        <dbReference type="ChEBI" id="CHEBI:58165"/>
        <dbReference type="EC" id="4.6.1.1"/>
    </reaction>
</comment>
<comment type="cofactor">
    <cofactor evidence="13">
        <name>Mn(2+)</name>
        <dbReference type="ChEBI" id="CHEBI:29035"/>
    </cofactor>
    <text evidence="13">No activity with magnesium.</text>
</comment>
<comment type="activity regulation">
    <text evidence="7 8 10">Activated by binding G protein gpa2 (PubMed:15831585). Activated by git1 (PubMed:16489217). In contrast to yeast cyclase, S.pombe cyclase is not likely to be regulated by RAS proteins (PubMed:2668944).</text>
</comment>
<comment type="biophysicochemical properties">
    <phDependence>
        <text evidence="9">Optimum pH is around 6.</text>
    </phDependence>
</comment>
<comment type="subunit">
    <text evidence="7 8">Interacts (via N-terminus) with gpa2; the interaction is direct and serves to activate adenylate cyclase and cAMP-PKA signaling, to repress sexual development and gluconeogenesis (PubMed:15831585). Interacts with git1 (PubMed:16489217).</text>
</comment>
<comment type="interaction">
    <interactant intactId="EBI-1542835">
        <id>P14605</id>
    </interactant>
    <interactant intactId="EBI-1542810">
        <id>Q9P7K5</id>
        <label>git1</label>
    </interactant>
    <organismsDiffer>false</organismsDiffer>
    <experiments>3</experiments>
</comment>
<comment type="subcellular location">
    <subcellularLocation>
        <location evidence="8">Cytoplasm</location>
    </subcellularLocation>
</comment>
<comment type="disruption phenotype">
    <text evidence="6">Leads to starvation-independent sexual development; the effect is suppressed by cAMP.</text>
</comment>
<comment type="similarity">
    <text evidence="12">Belongs to the adenylyl cyclase class-3 family.</text>
</comment>
<feature type="chain" id="PRO_0000195733" description="Adenylate cyclase">
    <location>
        <begin position="1"/>
        <end position="1692"/>
    </location>
</feature>
<feature type="domain" description="Ras-associating" evidence="3">
    <location>
        <begin position="292"/>
        <end position="380"/>
    </location>
</feature>
<feature type="repeat" description="LRR 1">
    <location>
        <begin position="430"/>
        <end position="450"/>
    </location>
</feature>
<feature type="repeat" description="LRR 2">
    <location>
        <begin position="454"/>
        <end position="474"/>
    </location>
</feature>
<feature type="repeat" description="LRR 3">
    <location>
        <begin position="477"/>
        <end position="498"/>
    </location>
</feature>
<feature type="repeat" description="LRR 4">
    <location>
        <begin position="503"/>
        <end position="524"/>
    </location>
</feature>
<feature type="repeat" description="LRR 5">
    <location>
        <begin position="526"/>
        <end position="547"/>
    </location>
</feature>
<feature type="repeat" description="LRR 6">
    <location>
        <begin position="549"/>
        <end position="570"/>
    </location>
</feature>
<feature type="repeat" description="LRR 7">
    <location>
        <begin position="572"/>
        <end position="594"/>
    </location>
</feature>
<feature type="repeat" description="LRR 8">
    <location>
        <begin position="596"/>
        <end position="617"/>
    </location>
</feature>
<feature type="repeat" description="LRR 9">
    <location>
        <begin position="618"/>
        <end position="639"/>
    </location>
</feature>
<feature type="repeat" description="LRR 10">
    <location>
        <begin position="660"/>
        <end position="681"/>
    </location>
</feature>
<feature type="repeat" description="LRR 11">
    <location>
        <begin position="684"/>
        <end position="705"/>
    </location>
</feature>
<feature type="repeat" description="LRR 12">
    <location>
        <begin position="707"/>
        <end position="729"/>
    </location>
</feature>
<feature type="repeat" description="LRR 13">
    <location>
        <begin position="730"/>
        <end position="751"/>
    </location>
</feature>
<feature type="repeat" description="LRR 14">
    <location>
        <begin position="753"/>
        <end position="774"/>
    </location>
</feature>
<feature type="repeat" description="LRR 15">
    <location>
        <begin position="783"/>
        <end position="805"/>
    </location>
</feature>
<feature type="repeat" description="LRR 16">
    <location>
        <begin position="807"/>
        <end position="827"/>
    </location>
</feature>
<feature type="repeat" description="LRR 17">
    <location>
        <begin position="831"/>
        <end position="852"/>
    </location>
</feature>
<feature type="repeat" description="LRR 18">
    <location>
        <begin position="855"/>
        <end position="876"/>
    </location>
</feature>
<feature type="repeat" description="LRR 19">
    <location>
        <begin position="878"/>
        <end position="899"/>
    </location>
</feature>
<feature type="repeat" description="LRR 20">
    <location>
        <begin position="901"/>
        <end position="922"/>
    </location>
</feature>
<feature type="repeat" description="LRR 21">
    <location>
        <begin position="930"/>
        <end position="951"/>
    </location>
</feature>
<feature type="domain" description="PPM-type phosphatase" evidence="4">
    <location>
        <begin position="995"/>
        <end position="1275"/>
    </location>
</feature>
<feature type="domain" description="Guanylate cyclase" evidence="2">
    <location>
        <begin position="1332"/>
        <end position="1469"/>
    </location>
</feature>
<feature type="region of interest" description="Disordered" evidence="5">
    <location>
        <begin position="1"/>
        <end position="22"/>
    </location>
</feature>
<feature type="region of interest" description="Disordered" evidence="5">
    <location>
        <begin position="103"/>
        <end position="142"/>
    </location>
</feature>
<feature type="region of interest" description="Required for interaction with gpa2" evidence="7">
    <location>
        <begin position="174"/>
        <end position="195"/>
    </location>
</feature>
<feature type="region of interest" description="Disordered" evidence="5">
    <location>
        <begin position="1585"/>
        <end position="1614"/>
    </location>
</feature>
<feature type="compositionally biased region" description="Basic and acidic residues" evidence="5">
    <location>
        <begin position="120"/>
        <end position="132"/>
    </location>
</feature>
<feature type="compositionally biased region" description="Basic and acidic residues" evidence="5">
    <location>
        <begin position="1585"/>
        <end position="1597"/>
    </location>
</feature>
<feature type="compositionally biased region" description="Polar residues" evidence="5">
    <location>
        <begin position="1600"/>
        <end position="1614"/>
    </location>
</feature>
<feature type="binding site" evidence="1">
    <location>
        <position position="1337"/>
    </location>
    <ligand>
        <name>Mg(2+)</name>
        <dbReference type="ChEBI" id="CHEBI:18420"/>
    </ligand>
</feature>
<feature type="binding site" evidence="1">
    <location>
        <position position="1337"/>
    </location>
    <ligand>
        <name>Mn(2+)</name>
        <dbReference type="ChEBI" id="CHEBI:29035"/>
    </ligand>
</feature>
<feature type="binding site" evidence="1">
    <location>
        <position position="1380"/>
    </location>
    <ligand>
        <name>Mg(2+)</name>
        <dbReference type="ChEBI" id="CHEBI:18420"/>
    </ligand>
</feature>
<feature type="binding site" evidence="1">
    <location>
        <position position="1380"/>
    </location>
    <ligand>
        <name>Mn(2+)</name>
        <dbReference type="ChEBI" id="CHEBI:29035"/>
    </ligand>
</feature>
<feature type="mutagenesis site" description="Decreases interaction with G protein gpa2 and decreases cellular cAMP levels following glucose stimulation." evidence="7">
    <original>LT</original>
    <variation>AA</variation>
    <location>
        <begin position="177"/>
        <end position="178"/>
    </location>
</feature>
<feature type="mutagenesis site" description="Decreases interaction with G protein gpa2 and decreases cellular cAMP levels following glucose stimulation." evidence="7">
    <original>P</original>
    <variation>A</variation>
    <location>
        <position position="180"/>
    </location>
</feature>
<organism>
    <name type="scientific">Schizosaccharomyces pombe (strain 972 / ATCC 24843)</name>
    <name type="common">Fission yeast</name>
    <dbReference type="NCBI Taxonomy" id="284812"/>
    <lineage>
        <taxon>Eukaryota</taxon>
        <taxon>Fungi</taxon>
        <taxon>Dikarya</taxon>
        <taxon>Ascomycota</taxon>
        <taxon>Taphrinomycotina</taxon>
        <taxon>Schizosaccharomycetes</taxon>
        <taxon>Schizosaccharomycetales</taxon>
        <taxon>Schizosaccharomycetaceae</taxon>
        <taxon>Schizosaccharomyces</taxon>
    </lineage>
</organism>
<reference key="1">
    <citation type="journal article" date="1989" name="Proc. Natl. Acad. Sci. U.S.A.">
        <title>The adenylyl cyclase gene from Schizosaccharomyces pombe.</title>
        <authorList>
            <person name="Young D."/>
            <person name="Riggs M."/>
            <person name="Field J."/>
            <person name="Vojtek A."/>
            <person name="Broek D."/>
            <person name="Wigler M."/>
        </authorList>
    </citation>
    <scope>NUCLEOTIDE SEQUENCE [GENOMIC DNA]</scope>
</reference>
<reference key="2">
    <citation type="journal article" date="1989" name="Proc. Natl. Acad. Sci. U.S.A.">
        <title>Adenylate cyclases in yeast: a comparison of the genes from Schizosaccharomyces pombe and Saccharomyces cerevisiae.</title>
        <authorList>
            <person name="Yamawaki-Kataoka Y."/>
            <person name="Tamaoki T."/>
            <person name="Choe H.-R."/>
            <person name="Tanaka H."/>
            <person name="Kataoka T."/>
        </authorList>
    </citation>
    <scope>NUCLEOTIDE SEQUENCE [GENOMIC DNA]</scope>
    <scope>ACTIVITY REGULATION</scope>
</reference>
<reference key="3">
    <citation type="journal article" date="2002" name="Nature">
        <title>The genome sequence of Schizosaccharomyces pombe.</title>
        <authorList>
            <person name="Wood V."/>
            <person name="Gwilliam R."/>
            <person name="Rajandream M.A."/>
            <person name="Lyne M.H."/>
            <person name="Lyne R."/>
            <person name="Stewart A."/>
            <person name="Sgouros J.G."/>
            <person name="Peat N."/>
            <person name="Hayles J."/>
            <person name="Baker S.G."/>
            <person name="Basham D."/>
            <person name="Bowman S."/>
            <person name="Brooks K."/>
            <person name="Brown D."/>
            <person name="Brown S."/>
            <person name="Chillingworth T."/>
            <person name="Churcher C.M."/>
            <person name="Collins M."/>
            <person name="Connor R."/>
            <person name="Cronin A."/>
            <person name="Davis P."/>
            <person name="Feltwell T."/>
            <person name="Fraser A."/>
            <person name="Gentles S."/>
            <person name="Goble A."/>
            <person name="Hamlin N."/>
            <person name="Harris D.E."/>
            <person name="Hidalgo J."/>
            <person name="Hodgson G."/>
            <person name="Holroyd S."/>
            <person name="Hornsby T."/>
            <person name="Howarth S."/>
            <person name="Huckle E.J."/>
            <person name="Hunt S."/>
            <person name="Jagels K."/>
            <person name="James K.D."/>
            <person name="Jones L."/>
            <person name="Jones M."/>
            <person name="Leather S."/>
            <person name="McDonald S."/>
            <person name="McLean J."/>
            <person name="Mooney P."/>
            <person name="Moule S."/>
            <person name="Mungall K.L."/>
            <person name="Murphy L.D."/>
            <person name="Niblett D."/>
            <person name="Odell C."/>
            <person name="Oliver K."/>
            <person name="O'Neil S."/>
            <person name="Pearson D."/>
            <person name="Quail M.A."/>
            <person name="Rabbinowitsch E."/>
            <person name="Rutherford K.M."/>
            <person name="Rutter S."/>
            <person name="Saunders D."/>
            <person name="Seeger K."/>
            <person name="Sharp S."/>
            <person name="Skelton J."/>
            <person name="Simmonds M.N."/>
            <person name="Squares R."/>
            <person name="Squares S."/>
            <person name="Stevens K."/>
            <person name="Taylor K."/>
            <person name="Taylor R.G."/>
            <person name="Tivey A."/>
            <person name="Walsh S.V."/>
            <person name="Warren T."/>
            <person name="Whitehead S."/>
            <person name="Woodward J.R."/>
            <person name="Volckaert G."/>
            <person name="Aert R."/>
            <person name="Robben J."/>
            <person name="Grymonprez B."/>
            <person name="Weltjens I."/>
            <person name="Vanstreels E."/>
            <person name="Rieger M."/>
            <person name="Schaefer M."/>
            <person name="Mueller-Auer S."/>
            <person name="Gabel C."/>
            <person name="Fuchs M."/>
            <person name="Duesterhoeft A."/>
            <person name="Fritzc C."/>
            <person name="Holzer E."/>
            <person name="Moestl D."/>
            <person name="Hilbert H."/>
            <person name="Borzym K."/>
            <person name="Langer I."/>
            <person name="Beck A."/>
            <person name="Lehrach H."/>
            <person name="Reinhardt R."/>
            <person name="Pohl T.M."/>
            <person name="Eger P."/>
            <person name="Zimmermann W."/>
            <person name="Wedler H."/>
            <person name="Wambutt R."/>
            <person name="Purnelle B."/>
            <person name="Goffeau A."/>
            <person name="Cadieu E."/>
            <person name="Dreano S."/>
            <person name="Gloux S."/>
            <person name="Lelaure V."/>
            <person name="Mottier S."/>
            <person name="Galibert F."/>
            <person name="Aves S.J."/>
            <person name="Xiang Z."/>
            <person name="Hunt C."/>
            <person name="Moore K."/>
            <person name="Hurst S.M."/>
            <person name="Lucas M."/>
            <person name="Rochet M."/>
            <person name="Gaillardin C."/>
            <person name="Tallada V.A."/>
            <person name="Garzon A."/>
            <person name="Thode G."/>
            <person name="Daga R.R."/>
            <person name="Cruzado L."/>
            <person name="Jimenez J."/>
            <person name="Sanchez M."/>
            <person name="del Rey F."/>
            <person name="Benito J."/>
            <person name="Dominguez A."/>
            <person name="Revuelta J.L."/>
            <person name="Moreno S."/>
            <person name="Armstrong J."/>
            <person name="Forsburg S.L."/>
            <person name="Cerutti L."/>
            <person name="Lowe T."/>
            <person name="McCombie W.R."/>
            <person name="Paulsen I."/>
            <person name="Potashkin J."/>
            <person name="Shpakovski G.V."/>
            <person name="Ussery D."/>
            <person name="Barrell B.G."/>
            <person name="Nurse P."/>
        </authorList>
    </citation>
    <scope>NUCLEOTIDE SEQUENCE [LARGE SCALE GENOMIC DNA]</scope>
    <source>
        <strain>972 / ATCC 24843</strain>
    </source>
</reference>
<reference key="4">
    <citation type="journal article" date="1990" name="FEBS Lett.">
        <title>Adenylyl cyclase activity of the fission yeast Schizosaccharomyces pombe is not regulated by guanyl nucleotides.</title>
        <authorList>
            <person name="Engelberg D."/>
            <person name="Poradosu E."/>
            <person name="Simchen G."/>
            <person name="Levitzki A."/>
        </authorList>
    </citation>
    <scope>FUNCTION</scope>
    <scope>CATALYTIC ACTIVITY</scope>
    <scope>BIOPHYSICOCHEMICAL PROPERTIES</scope>
    <scope>COFACTOR</scope>
</reference>
<reference key="5">
    <citation type="journal article" date="2001" name="Genetics">
        <title>The git5 Gbeta and git11 Ggamma form an atypical Gbetagamma dimer acting in the fission yeast glucose/cAMP pathway.</title>
        <authorList>
            <person name="Landry S."/>
            <person name="Hoffman C.S."/>
        </authorList>
    </citation>
    <scope>FUNCTION</scope>
    <scope>DISRUPTION PHENOTYPE</scope>
</reference>
<reference key="6">
    <citation type="journal article" date="2005" name="Proc. Natl. Acad. Sci. U.S.A.">
        <title>Direct activation of fission yeast adenylate cyclase by the Gpa2 Galpha of the glucose signaling pathway.</title>
        <authorList>
            <person name="Ivey F.D."/>
            <person name="Hoffman C.S."/>
        </authorList>
    </citation>
    <scope>FUNCTION</scope>
    <scope>ACTIVITY REGULATION</scope>
    <scope>INTERACTION WITH GPA2</scope>
    <scope>MUTAGENESIS OF 177-LEU-THR-178 AND PRO-180</scope>
</reference>
<reference key="7">
    <citation type="journal article" date="2006" name="Genetics">
        <title>Schizosaccharomyces pombe Git1 is a C2-domain protein required for glucose activation of adenylate cyclase.</title>
        <authorList>
            <person name="Kao R.S."/>
            <person name="Morreale E."/>
            <person name="Wang L."/>
            <person name="Ivey F.D."/>
            <person name="Hoffman C.S."/>
        </authorList>
    </citation>
    <scope>ACTIVATION BY GIT1</scope>
    <scope>INTERACTION WITH GIT1</scope>
    <scope>SUBCELLULAR LOCATION</scope>
</reference>
<dbReference type="EC" id="4.6.1.1" evidence="13"/>
<dbReference type="EMBL" id="M26699">
    <property type="protein sequence ID" value="AAA35284.1"/>
    <property type="molecule type" value="Genomic_DNA"/>
</dbReference>
<dbReference type="EMBL" id="M24942">
    <property type="protein sequence ID" value="AAA35301.1"/>
    <property type="molecule type" value="Genomic_DNA"/>
</dbReference>
<dbReference type="EMBL" id="CU329671">
    <property type="protein sequence ID" value="CAA19571.1"/>
    <property type="molecule type" value="Genomic_DNA"/>
</dbReference>
<dbReference type="PIR" id="A33988">
    <property type="entry name" value="A33988"/>
</dbReference>
<dbReference type="RefSeq" id="NP_596159.1">
    <property type="nucleotide sequence ID" value="NM_001022079.2"/>
</dbReference>
<dbReference type="SMR" id="P14605"/>
<dbReference type="BioGRID" id="277329">
    <property type="interactions" value="38"/>
</dbReference>
<dbReference type="FunCoup" id="P14605">
    <property type="interactions" value="131"/>
</dbReference>
<dbReference type="IntAct" id="P14605">
    <property type="interactions" value="1"/>
</dbReference>
<dbReference type="STRING" id="284812.P14605"/>
<dbReference type="iPTMnet" id="P14605"/>
<dbReference type="PaxDb" id="4896-SPBC19C7.03.1"/>
<dbReference type="EnsemblFungi" id="SPBC19C7.03.1">
    <property type="protein sequence ID" value="SPBC19C7.03.1:pep"/>
    <property type="gene ID" value="SPBC19C7.03"/>
</dbReference>
<dbReference type="GeneID" id="2540810"/>
<dbReference type="KEGG" id="spo:2540810"/>
<dbReference type="PomBase" id="SPBC19C7.03">
    <property type="gene designation" value="cyr1"/>
</dbReference>
<dbReference type="VEuPathDB" id="FungiDB:SPBC19C7.03"/>
<dbReference type="eggNOG" id="KOG0618">
    <property type="taxonomic scope" value="Eukaryota"/>
</dbReference>
<dbReference type="HOGENOM" id="CLU_000430_4_1_1"/>
<dbReference type="InParanoid" id="P14605"/>
<dbReference type="OMA" id="QQVGYEE"/>
<dbReference type="PhylomeDB" id="P14605"/>
<dbReference type="PRO" id="PR:P14605"/>
<dbReference type="Proteomes" id="UP000002485">
    <property type="component" value="Chromosome II"/>
</dbReference>
<dbReference type="GO" id="GO:0005737">
    <property type="term" value="C:cytoplasm"/>
    <property type="evidence" value="ECO:0000314"/>
    <property type="project" value="PomBase"/>
</dbReference>
<dbReference type="GO" id="GO:0005886">
    <property type="term" value="C:plasma membrane"/>
    <property type="evidence" value="ECO:0000303"/>
    <property type="project" value="PomBase"/>
</dbReference>
<dbReference type="GO" id="GO:0004016">
    <property type="term" value="F:adenylate cyclase activity"/>
    <property type="evidence" value="ECO:0000314"/>
    <property type="project" value="PomBase"/>
</dbReference>
<dbReference type="GO" id="GO:0005524">
    <property type="term" value="F:ATP binding"/>
    <property type="evidence" value="ECO:0007669"/>
    <property type="project" value="UniProtKB-KW"/>
</dbReference>
<dbReference type="GO" id="GO:0000287">
    <property type="term" value="F:magnesium ion binding"/>
    <property type="evidence" value="ECO:0007669"/>
    <property type="project" value="InterPro"/>
</dbReference>
<dbReference type="GO" id="GO:0030145">
    <property type="term" value="F:manganese ion binding"/>
    <property type="evidence" value="ECO:0000314"/>
    <property type="project" value="PomBase"/>
</dbReference>
<dbReference type="GO" id="GO:0010619">
    <property type="term" value="P:adenylate cyclase-activating glucose-activated G protein-coupled receptor signaling pathway"/>
    <property type="evidence" value="ECO:0000315"/>
    <property type="project" value="PomBase"/>
</dbReference>
<dbReference type="GO" id="GO:0006171">
    <property type="term" value="P:cAMP biosynthetic process"/>
    <property type="evidence" value="ECO:0007669"/>
    <property type="project" value="UniProtKB-KW"/>
</dbReference>
<dbReference type="GO" id="GO:0035556">
    <property type="term" value="P:intracellular signal transduction"/>
    <property type="evidence" value="ECO:0000318"/>
    <property type="project" value="GO_Central"/>
</dbReference>
<dbReference type="GO" id="GO:0010515">
    <property type="term" value="P:negative regulation of induction of conjugation with cellular fusion"/>
    <property type="evidence" value="ECO:0000315"/>
    <property type="project" value="PomBase"/>
</dbReference>
<dbReference type="GO" id="GO:0000122">
    <property type="term" value="P:negative regulation of transcription by RNA polymerase II"/>
    <property type="evidence" value="ECO:0000315"/>
    <property type="project" value="PomBase"/>
</dbReference>
<dbReference type="CDD" id="cd07302">
    <property type="entry name" value="CHD"/>
    <property type="match status" value="1"/>
</dbReference>
<dbReference type="CDD" id="cd00143">
    <property type="entry name" value="PP2Cc"/>
    <property type="match status" value="1"/>
</dbReference>
<dbReference type="CDD" id="cd17214">
    <property type="entry name" value="RA_CYR1_like"/>
    <property type="match status" value="1"/>
</dbReference>
<dbReference type="FunFam" id="3.80.10.10:FF:002515">
    <property type="entry name" value="Adenylate cyclase"/>
    <property type="match status" value="1"/>
</dbReference>
<dbReference type="FunFam" id="3.80.10.10:FF:000779">
    <property type="entry name" value="Probable inactive serine/threonine-protein kinase DDB_G0278909"/>
    <property type="match status" value="1"/>
</dbReference>
<dbReference type="Gene3D" id="3.30.70.1230">
    <property type="entry name" value="Nucleotide cyclase"/>
    <property type="match status" value="1"/>
</dbReference>
<dbReference type="Gene3D" id="3.60.40.10">
    <property type="entry name" value="PPM-type phosphatase domain"/>
    <property type="match status" value="1"/>
</dbReference>
<dbReference type="Gene3D" id="3.80.10.10">
    <property type="entry name" value="Ribonuclease Inhibitor"/>
    <property type="match status" value="5"/>
</dbReference>
<dbReference type="InterPro" id="IPR001054">
    <property type="entry name" value="A/G_cyclase"/>
</dbReference>
<dbReference type="InterPro" id="IPR013716">
    <property type="entry name" value="Adenylate_cyclase_G-a-bd"/>
</dbReference>
<dbReference type="InterPro" id="IPR001611">
    <property type="entry name" value="Leu-rich_rpt"/>
</dbReference>
<dbReference type="InterPro" id="IPR003591">
    <property type="entry name" value="Leu-rich_rpt_typical-subtyp"/>
</dbReference>
<dbReference type="InterPro" id="IPR032675">
    <property type="entry name" value="LRR_dom_sf"/>
</dbReference>
<dbReference type="InterPro" id="IPR050216">
    <property type="entry name" value="LRR_domain-containing"/>
</dbReference>
<dbReference type="InterPro" id="IPR029787">
    <property type="entry name" value="Nucleotide_cyclase"/>
</dbReference>
<dbReference type="InterPro" id="IPR036457">
    <property type="entry name" value="PPM-type-like_dom_sf"/>
</dbReference>
<dbReference type="InterPro" id="IPR001932">
    <property type="entry name" value="PPM-type_phosphatase-like_dom"/>
</dbReference>
<dbReference type="InterPro" id="IPR000159">
    <property type="entry name" value="RA_dom"/>
</dbReference>
<dbReference type="InterPro" id="IPR055071">
    <property type="entry name" value="RA_PHLPP-like"/>
</dbReference>
<dbReference type="PANTHER" id="PTHR48051">
    <property type="match status" value="1"/>
</dbReference>
<dbReference type="PANTHER" id="PTHR48051:SF1">
    <property type="entry name" value="RAS SUPPRESSOR PROTEIN 1"/>
    <property type="match status" value="1"/>
</dbReference>
<dbReference type="Pfam" id="PF00211">
    <property type="entry name" value="Guanylate_cyc"/>
    <property type="match status" value="1"/>
</dbReference>
<dbReference type="Pfam" id="PF13855">
    <property type="entry name" value="LRR_8"/>
    <property type="match status" value="2"/>
</dbReference>
<dbReference type="Pfam" id="PF00481">
    <property type="entry name" value="PP2C"/>
    <property type="match status" value="1"/>
</dbReference>
<dbReference type="Pfam" id="PF23010">
    <property type="entry name" value="RA_3"/>
    <property type="match status" value="1"/>
</dbReference>
<dbReference type="SMART" id="SM00789">
    <property type="entry name" value="Ad_cyc_g-alpha"/>
    <property type="match status" value="1"/>
</dbReference>
<dbReference type="SMART" id="SM00044">
    <property type="entry name" value="CYCc"/>
    <property type="match status" value="1"/>
</dbReference>
<dbReference type="SMART" id="SM00364">
    <property type="entry name" value="LRR_BAC"/>
    <property type="match status" value="8"/>
</dbReference>
<dbReference type="SMART" id="SM00365">
    <property type="entry name" value="LRR_SD22"/>
    <property type="match status" value="6"/>
</dbReference>
<dbReference type="SMART" id="SM00369">
    <property type="entry name" value="LRR_TYP"/>
    <property type="match status" value="9"/>
</dbReference>
<dbReference type="SMART" id="SM00332">
    <property type="entry name" value="PP2Cc"/>
    <property type="match status" value="1"/>
</dbReference>
<dbReference type="SMART" id="SM00314">
    <property type="entry name" value="RA"/>
    <property type="match status" value="1"/>
</dbReference>
<dbReference type="SUPFAM" id="SSF52058">
    <property type="entry name" value="L domain-like"/>
    <property type="match status" value="1"/>
</dbReference>
<dbReference type="SUPFAM" id="SSF55073">
    <property type="entry name" value="Nucleotide cyclase"/>
    <property type="match status" value="1"/>
</dbReference>
<dbReference type="SUPFAM" id="SSF81606">
    <property type="entry name" value="PP2C-like"/>
    <property type="match status" value="1"/>
</dbReference>
<dbReference type="SUPFAM" id="SSF52047">
    <property type="entry name" value="RNI-like"/>
    <property type="match status" value="1"/>
</dbReference>
<dbReference type="PROSITE" id="PS50125">
    <property type="entry name" value="GUANYLATE_CYCLASE_2"/>
    <property type="match status" value="1"/>
</dbReference>
<dbReference type="PROSITE" id="PS51450">
    <property type="entry name" value="LRR"/>
    <property type="match status" value="14"/>
</dbReference>
<dbReference type="PROSITE" id="PS51746">
    <property type="entry name" value="PPM_2"/>
    <property type="match status" value="1"/>
</dbReference>
<dbReference type="PROSITE" id="PS50200">
    <property type="entry name" value="RA"/>
    <property type="match status" value="1"/>
</dbReference>
<evidence type="ECO:0000250" key="1">
    <source>
        <dbReference type="UniProtKB" id="Q99280"/>
    </source>
</evidence>
<evidence type="ECO:0000255" key="2">
    <source>
        <dbReference type="PROSITE-ProRule" id="PRU00099"/>
    </source>
</evidence>
<evidence type="ECO:0000255" key="3">
    <source>
        <dbReference type="PROSITE-ProRule" id="PRU00166"/>
    </source>
</evidence>
<evidence type="ECO:0000255" key="4">
    <source>
        <dbReference type="PROSITE-ProRule" id="PRU01082"/>
    </source>
</evidence>
<evidence type="ECO:0000256" key="5">
    <source>
        <dbReference type="SAM" id="MobiDB-lite"/>
    </source>
</evidence>
<evidence type="ECO:0000269" key="6">
    <source>
    </source>
</evidence>
<evidence type="ECO:0000269" key="7">
    <source>
    </source>
</evidence>
<evidence type="ECO:0000269" key="8">
    <source>
    </source>
</evidence>
<evidence type="ECO:0000269" key="9">
    <source>
    </source>
</evidence>
<evidence type="ECO:0000269" key="10">
    <source>
    </source>
</evidence>
<evidence type="ECO:0000303" key="11">
    <source>
    </source>
</evidence>
<evidence type="ECO:0000305" key="12"/>
<evidence type="ECO:0000305" key="13">
    <source>
    </source>
</evidence>
<evidence type="ECO:0000312" key="14">
    <source>
        <dbReference type="PomBase" id="SPBC19C7.03"/>
    </source>
</evidence>
<keyword id="KW-0067">ATP-binding</keyword>
<keyword id="KW-0115">cAMP biosynthesis</keyword>
<keyword id="KW-0963">Cytoplasm</keyword>
<keyword id="KW-0433">Leucine-rich repeat</keyword>
<keyword id="KW-0456">Lyase</keyword>
<keyword id="KW-0460">Magnesium</keyword>
<keyword id="KW-0479">Metal-binding</keyword>
<keyword id="KW-0547">Nucleotide-binding</keyword>
<keyword id="KW-1185">Reference proteome</keyword>
<keyword id="KW-0677">Repeat</keyword>